<evidence type="ECO:0000255" key="1">
    <source>
        <dbReference type="HAMAP-Rule" id="MF_01038"/>
    </source>
</evidence>
<organism>
    <name type="scientific">Metamycoplasma hominis (strain ATCC 23114 / DSM 25592 / NBRC 14850 / NCTC 10111 / PG21)</name>
    <name type="common">Mycoplasma hominis</name>
    <dbReference type="NCBI Taxonomy" id="347256"/>
    <lineage>
        <taxon>Bacteria</taxon>
        <taxon>Bacillati</taxon>
        <taxon>Mycoplasmatota</taxon>
        <taxon>Mycoplasmoidales</taxon>
        <taxon>Metamycoplasmataceae</taxon>
        <taxon>Metamycoplasma</taxon>
    </lineage>
</organism>
<protein>
    <recommendedName>
        <fullName evidence="1">2,3-bisphosphoglycerate-independent phosphoglycerate mutase</fullName>
        <shortName evidence="1">BPG-independent PGAM</shortName>
        <shortName evidence="1">Phosphoglyceromutase</shortName>
        <shortName evidence="1">iPGM</shortName>
        <ecNumber evidence="1">5.4.2.12</ecNumber>
    </recommendedName>
</protein>
<gene>
    <name evidence="1" type="primary">gpmI</name>
    <name type="synonym">pgm</name>
    <name type="ordered locus">MHO_3810</name>
</gene>
<dbReference type="EC" id="5.4.2.12" evidence="1"/>
<dbReference type="EMBL" id="AY169817">
    <property type="protein sequence ID" value="AAO39423.1"/>
    <property type="molecule type" value="Genomic_DNA"/>
</dbReference>
<dbReference type="EMBL" id="FP236530">
    <property type="protein sequence ID" value="CAX37516.1"/>
    <property type="molecule type" value="Genomic_DNA"/>
</dbReference>
<dbReference type="RefSeq" id="WP_012855655.1">
    <property type="nucleotide sequence ID" value="NC_013511.1"/>
</dbReference>
<dbReference type="SMR" id="Q6Y8Q8"/>
<dbReference type="STRING" id="347256.MHO_3810"/>
<dbReference type="PaxDb" id="347256-MHO_3810"/>
<dbReference type="KEGG" id="mho:MHO_3810"/>
<dbReference type="eggNOG" id="COG0696">
    <property type="taxonomic scope" value="Bacteria"/>
</dbReference>
<dbReference type="HOGENOM" id="CLU_026099_2_0_14"/>
<dbReference type="UniPathway" id="UPA00109">
    <property type="reaction ID" value="UER00186"/>
</dbReference>
<dbReference type="Proteomes" id="UP000002631">
    <property type="component" value="Chromosome"/>
</dbReference>
<dbReference type="GO" id="GO:0005829">
    <property type="term" value="C:cytosol"/>
    <property type="evidence" value="ECO:0007669"/>
    <property type="project" value="TreeGrafter"/>
</dbReference>
<dbReference type="GO" id="GO:0030145">
    <property type="term" value="F:manganese ion binding"/>
    <property type="evidence" value="ECO:0007669"/>
    <property type="project" value="UniProtKB-UniRule"/>
</dbReference>
<dbReference type="GO" id="GO:0004619">
    <property type="term" value="F:phosphoglycerate mutase activity"/>
    <property type="evidence" value="ECO:0007669"/>
    <property type="project" value="UniProtKB-EC"/>
</dbReference>
<dbReference type="GO" id="GO:0006007">
    <property type="term" value="P:glucose catabolic process"/>
    <property type="evidence" value="ECO:0007669"/>
    <property type="project" value="InterPro"/>
</dbReference>
<dbReference type="GO" id="GO:0006096">
    <property type="term" value="P:glycolytic process"/>
    <property type="evidence" value="ECO:0007669"/>
    <property type="project" value="UniProtKB-UniRule"/>
</dbReference>
<dbReference type="CDD" id="cd16010">
    <property type="entry name" value="iPGM"/>
    <property type="match status" value="1"/>
</dbReference>
<dbReference type="FunFam" id="3.40.1450.10:FF:000002">
    <property type="entry name" value="2,3-bisphosphoglycerate-independent phosphoglycerate mutase"/>
    <property type="match status" value="1"/>
</dbReference>
<dbReference type="Gene3D" id="3.40.720.10">
    <property type="entry name" value="Alkaline Phosphatase, subunit A"/>
    <property type="match status" value="1"/>
</dbReference>
<dbReference type="Gene3D" id="3.40.1450.10">
    <property type="entry name" value="BPG-independent phosphoglycerate mutase, domain B"/>
    <property type="match status" value="1"/>
</dbReference>
<dbReference type="HAMAP" id="MF_01038">
    <property type="entry name" value="GpmI"/>
    <property type="match status" value="1"/>
</dbReference>
<dbReference type="InterPro" id="IPR017850">
    <property type="entry name" value="Alkaline_phosphatase_core_sf"/>
</dbReference>
<dbReference type="InterPro" id="IPR011258">
    <property type="entry name" value="BPG-indep_PGM_N"/>
</dbReference>
<dbReference type="InterPro" id="IPR006124">
    <property type="entry name" value="Metalloenzyme"/>
</dbReference>
<dbReference type="InterPro" id="IPR036646">
    <property type="entry name" value="PGAM_B_sf"/>
</dbReference>
<dbReference type="InterPro" id="IPR005995">
    <property type="entry name" value="Pgm_bpd_ind"/>
</dbReference>
<dbReference type="NCBIfam" id="TIGR01307">
    <property type="entry name" value="pgm_bpd_ind"/>
    <property type="match status" value="1"/>
</dbReference>
<dbReference type="PANTHER" id="PTHR31637">
    <property type="entry name" value="2,3-BISPHOSPHOGLYCERATE-INDEPENDENT PHOSPHOGLYCERATE MUTASE"/>
    <property type="match status" value="1"/>
</dbReference>
<dbReference type="PANTHER" id="PTHR31637:SF0">
    <property type="entry name" value="2,3-BISPHOSPHOGLYCERATE-INDEPENDENT PHOSPHOGLYCERATE MUTASE"/>
    <property type="match status" value="1"/>
</dbReference>
<dbReference type="Pfam" id="PF06415">
    <property type="entry name" value="iPGM_N"/>
    <property type="match status" value="1"/>
</dbReference>
<dbReference type="Pfam" id="PF01676">
    <property type="entry name" value="Metalloenzyme"/>
    <property type="match status" value="1"/>
</dbReference>
<dbReference type="PIRSF" id="PIRSF001492">
    <property type="entry name" value="IPGAM"/>
    <property type="match status" value="1"/>
</dbReference>
<dbReference type="SUPFAM" id="SSF64158">
    <property type="entry name" value="2,3-Bisphosphoglycerate-independent phosphoglycerate mutase, substrate-binding domain"/>
    <property type="match status" value="1"/>
</dbReference>
<dbReference type="SUPFAM" id="SSF53649">
    <property type="entry name" value="Alkaline phosphatase-like"/>
    <property type="match status" value="1"/>
</dbReference>
<sequence>MKKIILTIIDGLGLRKERQGNAYLQAKHPCFDYLFSMCPNSVLQASGQYVGLPEGQIGNSEVGHLNIGAGRVVYTGLSLINKAIENNTFKDNEILNDVIDKTIKNNTTLHVMGLLSNGGVHSLDLHLFEILKLAHSKGLKNVSVHVFGDGRDVKPQSIKNSLETLKDLCQKFGYKISSISGRFYAMDRDSIFSRNQEAYDAILGQSKNVIENIDDYIESQYKKGIFDEFFEPAQLKDGVFVKNGDSIIFFNFRPDRARQLSHMFIGSNLYTYKPKNQVQIDNFVSLMKYEGINSKIAFKEMEVVNPLGKVLESNDIKQLRLAETQKYAHVTFFFDGGVDIEYKNENRILVDSLKVDSFADYPHMSAKEITDSLLNNIEKNDFIIMNYANPDMVGHTGNLNATIEAIEFLDSQFQRILEYVSLNHENVTWFITADHGNAEITEDENNKPATKHTTSPVMFICTDKNVNLGNGSLCDVAPTILDYLKINKPKEMTGKSLLK</sequence>
<proteinExistence type="inferred from homology"/>
<feature type="chain" id="PRO_0000212168" description="2,3-bisphosphoglycerate-independent phosphoglycerate mutase">
    <location>
        <begin position="1"/>
        <end position="499"/>
    </location>
</feature>
<feature type="active site" description="Phosphoserine intermediate" evidence="1">
    <location>
        <position position="60"/>
    </location>
</feature>
<feature type="binding site" evidence="1">
    <location>
        <position position="10"/>
    </location>
    <ligand>
        <name>Mn(2+)</name>
        <dbReference type="ChEBI" id="CHEBI:29035"/>
        <label>2</label>
    </ligand>
</feature>
<feature type="binding site" evidence="1">
    <location>
        <position position="60"/>
    </location>
    <ligand>
        <name>Mn(2+)</name>
        <dbReference type="ChEBI" id="CHEBI:29035"/>
        <label>2</label>
    </ligand>
</feature>
<feature type="binding site" evidence="1">
    <location>
        <position position="121"/>
    </location>
    <ligand>
        <name>substrate</name>
    </ligand>
</feature>
<feature type="binding site" evidence="1">
    <location>
        <begin position="151"/>
        <end position="152"/>
    </location>
    <ligand>
        <name>substrate</name>
    </ligand>
</feature>
<feature type="binding site" evidence="1">
    <location>
        <position position="182"/>
    </location>
    <ligand>
        <name>substrate</name>
    </ligand>
</feature>
<feature type="binding site" evidence="1">
    <location>
        <position position="188"/>
    </location>
    <ligand>
        <name>substrate</name>
    </ligand>
</feature>
<feature type="binding site" evidence="1">
    <location>
        <begin position="253"/>
        <end position="256"/>
    </location>
    <ligand>
        <name>substrate</name>
    </ligand>
</feature>
<feature type="binding site" evidence="1">
    <location>
        <position position="326"/>
    </location>
    <ligand>
        <name>substrate</name>
    </ligand>
</feature>
<feature type="binding site" evidence="1">
    <location>
        <position position="391"/>
    </location>
    <ligand>
        <name>Mn(2+)</name>
        <dbReference type="ChEBI" id="CHEBI:29035"/>
        <label>1</label>
    </ligand>
</feature>
<feature type="binding site" evidence="1">
    <location>
        <position position="395"/>
    </location>
    <ligand>
        <name>Mn(2+)</name>
        <dbReference type="ChEBI" id="CHEBI:29035"/>
        <label>1</label>
    </ligand>
</feature>
<feature type="binding site" evidence="1">
    <location>
        <position position="434"/>
    </location>
    <ligand>
        <name>Mn(2+)</name>
        <dbReference type="ChEBI" id="CHEBI:29035"/>
        <label>2</label>
    </ligand>
</feature>
<feature type="binding site" evidence="1">
    <location>
        <position position="435"/>
    </location>
    <ligand>
        <name>Mn(2+)</name>
        <dbReference type="ChEBI" id="CHEBI:29035"/>
        <label>2</label>
    </ligand>
</feature>
<feature type="binding site" evidence="1">
    <location>
        <position position="452"/>
    </location>
    <ligand>
        <name>Mn(2+)</name>
        <dbReference type="ChEBI" id="CHEBI:29035"/>
        <label>1</label>
    </ligand>
</feature>
<reference key="1">
    <citation type="submission" date="2002-10" db="EMBL/GenBank/DDBJ databases">
        <title>Identification of two multidrug efflux pump genes associated with ciprofloxacin and ethidium bromide resistance in Mycoplasma hominis.</title>
        <authorList>
            <person name="Raherison S."/>
            <person name="Gonzalez P."/>
            <person name="Charron A."/>
            <person name="Renaudin H."/>
            <person name="Bebear C."/>
            <person name="Bebear C.M."/>
        </authorList>
    </citation>
    <scope>NUCLEOTIDE SEQUENCE [GENOMIC DNA]</scope>
</reference>
<reference key="2">
    <citation type="journal article" date="2009" name="PLoS Genet.">
        <title>Life on arginine for Mycoplasma hominis: clues from its minimal genome and comparison with other human urogenital mycoplasmas.</title>
        <authorList>
            <person name="Pereyre S."/>
            <person name="Sirand-Pugnet P."/>
            <person name="Beven L."/>
            <person name="Charron A."/>
            <person name="Renaudin H."/>
            <person name="Barre A."/>
            <person name="Avenaud P."/>
            <person name="Jacob D."/>
            <person name="Couloux A."/>
            <person name="Barbe V."/>
            <person name="de Daruvar A."/>
            <person name="Blanchard A."/>
            <person name="Bebear C."/>
        </authorList>
    </citation>
    <scope>NUCLEOTIDE SEQUENCE [LARGE SCALE GENOMIC DNA]</scope>
    <source>
        <strain>ATCC 23114 / DSM 25592 / NBRC 14850 / NCTC 10111 / PG21</strain>
    </source>
</reference>
<keyword id="KW-0324">Glycolysis</keyword>
<keyword id="KW-0413">Isomerase</keyword>
<keyword id="KW-0464">Manganese</keyword>
<keyword id="KW-0479">Metal-binding</keyword>
<keyword id="KW-1185">Reference proteome</keyword>
<name>GPMI_METH1</name>
<accession>Q6Y8Q8</accession>
<accession>D1J8G9</accession>
<comment type="function">
    <text evidence="1">Catalyzes the interconversion of 2-phosphoglycerate and 3-phosphoglycerate.</text>
</comment>
<comment type="catalytic activity">
    <reaction evidence="1">
        <text>(2R)-2-phosphoglycerate = (2R)-3-phosphoglycerate</text>
        <dbReference type="Rhea" id="RHEA:15901"/>
        <dbReference type="ChEBI" id="CHEBI:58272"/>
        <dbReference type="ChEBI" id="CHEBI:58289"/>
        <dbReference type="EC" id="5.4.2.12"/>
    </reaction>
</comment>
<comment type="cofactor">
    <cofactor evidence="1">
        <name>Mn(2+)</name>
        <dbReference type="ChEBI" id="CHEBI:29035"/>
    </cofactor>
    <text evidence="1">Binds 2 manganese ions per subunit.</text>
</comment>
<comment type="pathway">
    <text evidence="1">Carbohydrate degradation; glycolysis; pyruvate from D-glyceraldehyde 3-phosphate: step 3/5.</text>
</comment>
<comment type="subunit">
    <text evidence="1">Monomer.</text>
</comment>
<comment type="similarity">
    <text evidence="1">Belongs to the BPG-independent phosphoglycerate mutase family.</text>
</comment>